<comment type="function">
    <text evidence="4">Plays a role in alternative splice site selection during pre-mRNA splicing. Represses the splicing of MAPT/Tau exon 10.</text>
</comment>
<comment type="subunit">
    <text evidence="3 6">Found in a pre-mRNA splicing complex with SRSF4/SFRS4, SRSF5/SFRS5, SNRNP70, SNRPA1, SRRM1 and SRRM2. Interacts with PNN.</text>
</comment>
<comment type="interaction">
    <interactant intactId="EBI-722621">
        <id>Q08170</id>
    </interactant>
    <interactant intactId="EBI-1055254">
        <id>Q8WXH2</id>
        <label>JPH3</label>
    </interactant>
    <organismsDiffer>false</organismsDiffer>
    <experiments>3</experiments>
</comment>
<comment type="interaction">
    <interactant intactId="EBI-722621">
        <id>Q08170</id>
    </interactant>
    <interactant intactId="EBI-745230">
        <id>Q13247</id>
        <label>SRSF6</label>
    </interactant>
    <organismsDiffer>false</organismsDiffer>
    <experiments>4</experiments>
</comment>
<comment type="interaction">
    <interactant intactId="EBI-722621">
        <id>Q08170</id>
    </interactant>
    <interactant intactId="EBI-725485">
        <id>P62995</id>
        <label>TRA2B</label>
    </interactant>
    <organismsDiffer>false</organismsDiffer>
    <experiments>4</experiments>
</comment>
<comment type="interaction">
    <interactant intactId="EBI-722621">
        <id>Q08170</id>
    </interactant>
    <interactant intactId="EBI-10180829">
        <id>Q7KZS0</id>
        <label>UBE2I</label>
    </interactant>
    <organismsDiffer>false</organismsDiffer>
    <experiments>3</experiments>
</comment>
<comment type="subcellular location">
    <subcellularLocation>
        <location evidence="3">Nucleus speckle</location>
    </subcellularLocation>
</comment>
<comment type="PTM">
    <text>Extensively phosphorylated on serine residues in the RS domain.</text>
</comment>
<comment type="similarity">
    <text evidence="7">Belongs to the splicing factor SR family.</text>
</comment>
<protein>
    <recommendedName>
        <fullName>Serine/arginine-rich splicing factor 4</fullName>
    </recommendedName>
    <alternativeName>
        <fullName>Pre-mRNA-splicing factor SRP75</fullName>
    </alternativeName>
    <alternativeName>
        <fullName>SRP001LB</fullName>
    </alternativeName>
    <alternativeName>
        <fullName>Splicing factor, arginine/serine-rich 4</fullName>
    </alternativeName>
</protein>
<dbReference type="EMBL" id="L14076">
    <property type="protein sequence ID" value="AAA36649.1"/>
    <property type="molecule type" value="mRNA"/>
</dbReference>
<dbReference type="EMBL" id="BT007415">
    <property type="protein sequence ID" value="AAP36083.1"/>
    <property type="molecule type" value="mRNA"/>
</dbReference>
<dbReference type="EMBL" id="AL590729">
    <property type="status" value="NOT_ANNOTATED_CDS"/>
    <property type="molecule type" value="Genomic_DNA"/>
</dbReference>
<dbReference type="EMBL" id="AL357500">
    <property type="status" value="NOT_ANNOTATED_CDS"/>
    <property type="molecule type" value="Genomic_DNA"/>
</dbReference>
<dbReference type="EMBL" id="BC002781">
    <property type="protein sequence ID" value="AAH02781.1"/>
    <property type="molecule type" value="mRNA"/>
</dbReference>
<dbReference type="EMBL" id="AC004236">
    <property type="protein sequence ID" value="AAC04476.1"/>
    <property type="molecule type" value="Genomic_DNA"/>
</dbReference>
<dbReference type="CCDS" id="CCDS333.1"/>
<dbReference type="PIR" id="A48133">
    <property type="entry name" value="A48133"/>
</dbReference>
<dbReference type="RefSeq" id="NP_005617.2">
    <property type="nucleotide sequence ID" value="NM_005626.4"/>
</dbReference>
<dbReference type="SMR" id="Q08170"/>
<dbReference type="BioGRID" id="112327">
    <property type="interactions" value="401"/>
</dbReference>
<dbReference type="CORUM" id="Q08170"/>
<dbReference type="FunCoup" id="Q08170">
    <property type="interactions" value="2488"/>
</dbReference>
<dbReference type="IntAct" id="Q08170">
    <property type="interactions" value="200"/>
</dbReference>
<dbReference type="MINT" id="Q08170"/>
<dbReference type="STRING" id="9606.ENSP00000362900"/>
<dbReference type="DrugBank" id="DB11638">
    <property type="generic name" value="Artenimol"/>
</dbReference>
<dbReference type="GlyGen" id="Q08170">
    <property type="glycosylation" value="1 site, 1 O-linked glycan (1 site)"/>
</dbReference>
<dbReference type="iPTMnet" id="Q08170"/>
<dbReference type="PhosphoSitePlus" id="Q08170"/>
<dbReference type="SwissPalm" id="Q08170"/>
<dbReference type="BioMuta" id="SRSF4"/>
<dbReference type="DMDM" id="20981726"/>
<dbReference type="jPOST" id="Q08170"/>
<dbReference type="MassIVE" id="Q08170"/>
<dbReference type="PaxDb" id="9606-ENSP00000362900"/>
<dbReference type="PeptideAtlas" id="Q08170"/>
<dbReference type="ProteomicsDB" id="58574"/>
<dbReference type="Pumba" id="Q08170"/>
<dbReference type="Antibodypedia" id="31007">
    <property type="antibodies" value="168 antibodies from 25 providers"/>
</dbReference>
<dbReference type="DNASU" id="6429"/>
<dbReference type="Ensembl" id="ENST00000373795.7">
    <property type="protein sequence ID" value="ENSP00000362900.4"/>
    <property type="gene ID" value="ENSG00000116350.18"/>
</dbReference>
<dbReference type="GeneID" id="6429"/>
<dbReference type="KEGG" id="hsa:6429"/>
<dbReference type="MANE-Select" id="ENST00000373795.7">
    <property type="protein sequence ID" value="ENSP00000362900.4"/>
    <property type="RefSeq nucleotide sequence ID" value="NM_005626.5"/>
    <property type="RefSeq protein sequence ID" value="NP_005617.2"/>
</dbReference>
<dbReference type="UCSC" id="uc001bro.4">
    <property type="organism name" value="human"/>
</dbReference>
<dbReference type="AGR" id="HGNC:10786"/>
<dbReference type="CTD" id="6429"/>
<dbReference type="DisGeNET" id="6429"/>
<dbReference type="GeneCards" id="SRSF4"/>
<dbReference type="HGNC" id="HGNC:10786">
    <property type="gene designation" value="SRSF4"/>
</dbReference>
<dbReference type="HPA" id="ENSG00000116350">
    <property type="expression patterns" value="Low tissue specificity"/>
</dbReference>
<dbReference type="MIM" id="601940">
    <property type="type" value="gene"/>
</dbReference>
<dbReference type="neXtProt" id="NX_Q08170"/>
<dbReference type="OpenTargets" id="ENSG00000116350"/>
<dbReference type="PharmGKB" id="PA35702"/>
<dbReference type="VEuPathDB" id="HostDB:ENSG00000116350"/>
<dbReference type="eggNOG" id="KOG0106">
    <property type="taxonomic scope" value="Eukaryota"/>
</dbReference>
<dbReference type="GeneTree" id="ENSGT00940000156213"/>
<dbReference type="InParanoid" id="Q08170"/>
<dbReference type="OMA" id="XGYGYRR"/>
<dbReference type="OrthoDB" id="1099063at2759"/>
<dbReference type="PAN-GO" id="Q08170">
    <property type="GO annotations" value="3 GO annotations based on evolutionary models"/>
</dbReference>
<dbReference type="PhylomeDB" id="Q08170"/>
<dbReference type="TreeFam" id="TF351335"/>
<dbReference type="PathwayCommons" id="Q08170"/>
<dbReference type="Reactome" id="R-HSA-159236">
    <property type="pathway name" value="Transport of Mature mRNA derived from an Intron-Containing Transcript"/>
</dbReference>
<dbReference type="Reactome" id="R-HSA-72163">
    <property type="pathway name" value="mRNA Splicing - Major Pathway"/>
</dbReference>
<dbReference type="Reactome" id="R-HSA-72187">
    <property type="pathway name" value="mRNA 3'-end processing"/>
</dbReference>
<dbReference type="Reactome" id="R-HSA-72203">
    <property type="pathway name" value="Processing of Capped Intron-Containing Pre-mRNA"/>
</dbReference>
<dbReference type="Reactome" id="R-HSA-73856">
    <property type="pathway name" value="RNA Polymerase II Transcription Termination"/>
</dbReference>
<dbReference type="SignaLink" id="Q08170"/>
<dbReference type="BioGRID-ORCS" id="6429">
    <property type="hits" value="28 hits in 1155 CRISPR screens"/>
</dbReference>
<dbReference type="CD-CODE" id="804901D1">
    <property type="entry name" value="Nuclear speckle"/>
</dbReference>
<dbReference type="CD-CODE" id="DEE660B4">
    <property type="entry name" value="Stress granule"/>
</dbReference>
<dbReference type="ChiTaRS" id="SRSF4">
    <property type="organism name" value="human"/>
</dbReference>
<dbReference type="GeneWiki" id="SFRS4"/>
<dbReference type="GenomeRNAi" id="6429"/>
<dbReference type="Pharos" id="Q08170">
    <property type="development level" value="Tbio"/>
</dbReference>
<dbReference type="PRO" id="PR:Q08170"/>
<dbReference type="Proteomes" id="UP000005640">
    <property type="component" value="Chromosome 1"/>
</dbReference>
<dbReference type="RNAct" id="Q08170">
    <property type="molecule type" value="protein"/>
</dbReference>
<dbReference type="Bgee" id="ENSG00000116350">
    <property type="expression patterns" value="Expressed in sural nerve and 205 other cell types or tissues"/>
</dbReference>
<dbReference type="ExpressionAtlas" id="Q08170">
    <property type="expression patterns" value="baseline and differential"/>
</dbReference>
<dbReference type="GO" id="GO:0016607">
    <property type="term" value="C:nuclear speck"/>
    <property type="evidence" value="ECO:0000314"/>
    <property type="project" value="HPA"/>
</dbReference>
<dbReference type="GO" id="GO:0005654">
    <property type="term" value="C:nucleoplasm"/>
    <property type="evidence" value="ECO:0000304"/>
    <property type="project" value="Reactome"/>
</dbReference>
<dbReference type="GO" id="GO:0005634">
    <property type="term" value="C:nucleus"/>
    <property type="evidence" value="ECO:0000304"/>
    <property type="project" value="ProtInc"/>
</dbReference>
<dbReference type="GO" id="GO:0003723">
    <property type="term" value="F:RNA binding"/>
    <property type="evidence" value="ECO:0007005"/>
    <property type="project" value="UniProtKB"/>
</dbReference>
<dbReference type="GO" id="GO:1990825">
    <property type="term" value="F:sequence-specific mRNA binding"/>
    <property type="evidence" value="ECO:0007669"/>
    <property type="project" value="Ensembl"/>
</dbReference>
<dbReference type="GO" id="GO:0006397">
    <property type="term" value="P:mRNA processing"/>
    <property type="evidence" value="ECO:0000304"/>
    <property type="project" value="ProtInc"/>
</dbReference>
<dbReference type="GO" id="GO:0000398">
    <property type="term" value="P:mRNA splicing, via spliceosome"/>
    <property type="evidence" value="ECO:0000318"/>
    <property type="project" value="GO_Central"/>
</dbReference>
<dbReference type="GO" id="GO:0048025">
    <property type="term" value="P:negative regulation of mRNA splicing, via spliceosome"/>
    <property type="evidence" value="ECO:0000314"/>
    <property type="project" value="UniProtKB"/>
</dbReference>
<dbReference type="GO" id="GO:0032868">
    <property type="term" value="P:response to insulin"/>
    <property type="evidence" value="ECO:0007669"/>
    <property type="project" value="Ensembl"/>
</dbReference>
<dbReference type="GO" id="GO:0008380">
    <property type="term" value="P:RNA splicing"/>
    <property type="evidence" value="ECO:0000304"/>
    <property type="project" value="ProtInc"/>
</dbReference>
<dbReference type="GO" id="GO:0000375">
    <property type="term" value="P:RNA splicing, via transesterification reactions"/>
    <property type="evidence" value="ECO:0000304"/>
    <property type="project" value="ProtInc"/>
</dbReference>
<dbReference type="CDD" id="cd12594">
    <property type="entry name" value="RRM1_SRSF4"/>
    <property type="match status" value="1"/>
</dbReference>
<dbReference type="CDD" id="cd12600">
    <property type="entry name" value="RRM2_SRSF4_like"/>
    <property type="match status" value="1"/>
</dbReference>
<dbReference type="FunFam" id="3.30.70.330:FF:000028">
    <property type="entry name" value="Putative serine/arginine-rich splicing factor 4"/>
    <property type="match status" value="1"/>
</dbReference>
<dbReference type="FunFam" id="3.30.70.330:FF:000190">
    <property type="entry name" value="serine/arginine-rich splicing factor 4 isoform X1"/>
    <property type="match status" value="1"/>
</dbReference>
<dbReference type="Gene3D" id="3.30.70.330">
    <property type="match status" value="2"/>
</dbReference>
<dbReference type="InterPro" id="IPR012677">
    <property type="entry name" value="Nucleotide-bd_a/b_plait_sf"/>
</dbReference>
<dbReference type="InterPro" id="IPR035979">
    <property type="entry name" value="RBD_domain_sf"/>
</dbReference>
<dbReference type="InterPro" id="IPR047190">
    <property type="entry name" value="RRM2_SRSF4/6"/>
</dbReference>
<dbReference type="InterPro" id="IPR000504">
    <property type="entry name" value="RRM_dom"/>
</dbReference>
<dbReference type="InterPro" id="IPR050374">
    <property type="entry name" value="RRT5_SRSF_SR"/>
</dbReference>
<dbReference type="PANTHER" id="PTHR23003">
    <property type="entry name" value="RNA RECOGNITION MOTIF RRM DOMAIN CONTAINING PROTEIN"/>
    <property type="match status" value="1"/>
</dbReference>
<dbReference type="PANTHER" id="PTHR23003:SF45">
    <property type="entry name" value="SERINE_ARGININE-RICH SPLICING FACTOR 4"/>
    <property type="match status" value="1"/>
</dbReference>
<dbReference type="Pfam" id="PF00076">
    <property type="entry name" value="RRM_1"/>
    <property type="match status" value="2"/>
</dbReference>
<dbReference type="SMART" id="SM00360">
    <property type="entry name" value="RRM"/>
    <property type="match status" value="2"/>
</dbReference>
<dbReference type="SUPFAM" id="SSF54928">
    <property type="entry name" value="RNA-binding domain, RBD"/>
    <property type="match status" value="1"/>
</dbReference>
<dbReference type="PROSITE" id="PS50102">
    <property type="entry name" value="RRM"/>
    <property type="match status" value="2"/>
</dbReference>
<gene>
    <name type="primary">SRSF4</name>
    <name type="synonym">SFRS4</name>
    <name type="synonym">SRP75</name>
</gene>
<evidence type="ECO:0000255" key="1">
    <source>
        <dbReference type="PROSITE-ProRule" id="PRU00176"/>
    </source>
</evidence>
<evidence type="ECO:0000256" key="2">
    <source>
        <dbReference type="SAM" id="MobiDB-lite"/>
    </source>
</evidence>
<evidence type="ECO:0000269" key="3">
    <source>
    </source>
</evidence>
<evidence type="ECO:0000269" key="4">
    <source>
    </source>
</evidence>
<evidence type="ECO:0000269" key="5">
    <source>
    </source>
</evidence>
<evidence type="ECO:0000269" key="6">
    <source>
    </source>
</evidence>
<evidence type="ECO:0000305" key="7"/>
<evidence type="ECO:0007744" key="8">
    <source>
    </source>
</evidence>
<evidence type="ECO:0007744" key="9">
    <source>
    </source>
</evidence>
<evidence type="ECO:0007744" key="10">
    <source>
    </source>
</evidence>
<evidence type="ECO:0007744" key="11">
    <source>
    </source>
</evidence>
<proteinExistence type="evidence at protein level"/>
<name>SRSF4_HUMAN</name>
<feature type="chain" id="PRO_0000081925" description="Serine/arginine-rich splicing factor 4">
    <location>
        <begin position="1"/>
        <end position="494"/>
    </location>
</feature>
<feature type="domain" description="RRM 1" evidence="1">
    <location>
        <begin position="2"/>
        <end position="72"/>
    </location>
</feature>
<feature type="domain" description="RRM 2" evidence="1">
    <location>
        <begin position="104"/>
        <end position="177"/>
    </location>
</feature>
<feature type="region of interest" description="Disordered" evidence="2">
    <location>
        <begin position="72"/>
        <end position="95"/>
    </location>
</feature>
<feature type="region of interest" description="Disordered" evidence="2">
    <location>
        <begin position="169"/>
        <end position="494"/>
    </location>
</feature>
<feature type="compositionally biased region" description="Basic residues" evidence="2">
    <location>
        <begin position="179"/>
        <end position="206"/>
    </location>
</feature>
<feature type="compositionally biased region" description="Basic residues" evidence="2">
    <location>
        <begin position="214"/>
        <end position="246"/>
    </location>
</feature>
<feature type="compositionally biased region" description="Basic and acidic residues" evidence="2">
    <location>
        <begin position="247"/>
        <end position="256"/>
    </location>
</feature>
<feature type="compositionally biased region" description="Basic residues" evidence="2">
    <location>
        <begin position="257"/>
        <end position="267"/>
    </location>
</feature>
<feature type="compositionally biased region" description="Basic and acidic residues" evidence="2">
    <location>
        <begin position="268"/>
        <end position="278"/>
    </location>
</feature>
<feature type="compositionally biased region" description="Basic residues" evidence="2">
    <location>
        <begin position="286"/>
        <end position="302"/>
    </location>
</feature>
<feature type="compositionally biased region" description="Basic and acidic residues" evidence="2">
    <location>
        <begin position="303"/>
        <end position="327"/>
    </location>
</feature>
<feature type="compositionally biased region" description="Basic residues" evidence="2">
    <location>
        <begin position="328"/>
        <end position="359"/>
    </location>
</feature>
<feature type="compositionally biased region" description="Basic residues" evidence="2">
    <location>
        <begin position="367"/>
        <end position="382"/>
    </location>
</feature>
<feature type="compositionally biased region" description="Basic and acidic residues" evidence="2">
    <location>
        <begin position="411"/>
        <end position="431"/>
    </location>
</feature>
<feature type="compositionally biased region" description="Low complexity" evidence="2">
    <location>
        <begin position="449"/>
        <end position="460"/>
    </location>
</feature>
<feature type="compositionally biased region" description="Basic residues" evidence="2">
    <location>
        <begin position="461"/>
        <end position="494"/>
    </location>
</feature>
<feature type="modified residue" description="Phosphoserine" evidence="8">
    <location>
        <position position="78"/>
    </location>
</feature>
<feature type="modified residue" description="Phosphoserine" evidence="10">
    <location>
        <position position="84"/>
    </location>
</feature>
<feature type="modified residue" description="Phosphoserine" evidence="10">
    <location>
        <position position="288"/>
    </location>
</feature>
<feature type="modified residue" description="Phosphoserine" evidence="10">
    <location>
        <position position="290"/>
    </location>
</feature>
<feature type="modified residue" description="Phosphoserine" evidence="10">
    <location>
        <position position="292"/>
    </location>
</feature>
<feature type="modified residue" description="Phosphoserine" evidence="8 9">
    <location>
        <position position="431"/>
    </location>
</feature>
<feature type="modified residue" description="Phosphoserine" evidence="11">
    <location>
        <position position="446"/>
    </location>
</feature>
<feature type="modified residue" description="Phosphoserine" evidence="10">
    <location>
        <position position="456"/>
    </location>
</feature>
<feature type="modified residue" description="Phosphoserine" evidence="10 11">
    <location>
        <position position="458"/>
    </location>
</feature>
<feature type="modified residue" description="Phosphoserine" evidence="10">
    <location>
        <position position="460"/>
    </location>
</feature>
<feature type="sequence variant" id="VAR_052230" description="In dbSNP:rs2230679." evidence="5">
    <original>E</original>
    <variation>D</variation>
    <location>
        <position position="253"/>
    </location>
</feature>
<feature type="sequence variant" id="VAR_052231" description="In dbSNP:rs2230677." evidence="5">
    <original>G</original>
    <variation>A</variation>
    <location>
        <position position="338"/>
    </location>
</feature>
<feature type="sequence variant" id="VAR_052232" description="In dbSNP:rs2230678." evidence="5">
    <original>G</original>
    <variation>S</variation>
    <location>
        <position position="356"/>
    </location>
</feature>
<feature type="sequence variant" id="VAR_052233" description="In dbSNP:rs1049928.">
    <original>Q</original>
    <variation>E</variation>
    <location>
        <position position="438"/>
    </location>
</feature>
<feature type="sequence conflict" description="In Ref. 6; AA sequence." evidence="7" ref="6">
    <original>N</original>
    <variation>D</variation>
    <location>
        <position position="35"/>
    </location>
</feature>
<feature type="sequence conflict" description="In Ref. 1; AAA36649." evidence="7" ref="1">
    <original>SRGRS</original>
    <variation>EQGQE</variation>
    <location>
        <begin position="318"/>
        <end position="322"/>
    </location>
</feature>
<feature type="sequence conflict" description="In Ref. 1; AAA36649." evidence="7" ref="1">
    <original>TNQ</original>
    <variation>RNE</variation>
    <location>
        <begin position="436"/>
        <end position="438"/>
    </location>
</feature>
<organism>
    <name type="scientific">Homo sapiens</name>
    <name type="common">Human</name>
    <dbReference type="NCBI Taxonomy" id="9606"/>
    <lineage>
        <taxon>Eukaryota</taxon>
        <taxon>Metazoa</taxon>
        <taxon>Chordata</taxon>
        <taxon>Craniata</taxon>
        <taxon>Vertebrata</taxon>
        <taxon>Euteleostomi</taxon>
        <taxon>Mammalia</taxon>
        <taxon>Eutheria</taxon>
        <taxon>Euarchontoglires</taxon>
        <taxon>Primates</taxon>
        <taxon>Haplorrhini</taxon>
        <taxon>Catarrhini</taxon>
        <taxon>Hominidae</taxon>
        <taxon>Homo</taxon>
    </lineage>
</organism>
<sequence>MPRVYIGRLSYQARERDVERFFKGYGKILEVDLKNGYGFVEFDDLRDADDAVYELNGKDLCGERVIVEHARGPRRDGSYGSGRSGYGYRRSGRDKYGPPTRTEYRLIVENLSSRCSWQDLKDYMRQAGEVTYADAHKGRKNEGVIEFVSYSDMKRALEKLDGTEVNGRKIRLVEDKPGSRRRRSYSRSRSHSRSRSRSRHSRKSRSRSGSSKSSHSKSRSRSRSGSRSRSKSRSRSQSRSRSKKEKSRSPSKEKSRSRSHSAGKSRSKSKDQAEEKIQNNDNVGKPKSRSPSRHKSKSKSRSRSQERRVEEEKRGSVSRGRSQEKSLRQSRSRSRSKGGSRSRSRSRSKSKDKRKGRKRSREESRSRSRSRSKSERSRKRGSKRDSKAGSSKKKKKEDTDRSQSRSPSRSVSKEREHAKSESSQREGRGESENAGTNQETRSRSRSNSKSKPNLPSESRSRSKSASKTRSRSKSRSRSASRSPSRSRSRSHSRS</sequence>
<accession>Q08170</accession>
<accession>Q5VXP1</accession>
<accession>Q9BUA4</accession>
<accession>Q9UEB5</accession>
<reference key="1">
    <citation type="journal article" date="1993" name="Mol. Cell. Biol.">
        <title>Human SR proteins and isolation of a cDNA encoding SRp75.</title>
        <authorList>
            <person name="Zahler A.M."/>
            <person name="Neugebauer K.M."/>
            <person name="Stolk J.A."/>
            <person name="Roth M.B."/>
        </authorList>
    </citation>
    <scope>NUCLEOTIDE SEQUENCE [MRNA]</scope>
    <scope>PARTIAL PROTEIN SEQUENCE</scope>
    <scope>VARIANTS ASP-253; ALA-338 AND SER-356</scope>
</reference>
<reference key="2">
    <citation type="submission" date="2003-05" db="EMBL/GenBank/DDBJ databases">
        <title>Cloning of human full-length CDSs in BD Creator(TM) system donor vector.</title>
        <authorList>
            <person name="Kalnine N."/>
            <person name="Chen X."/>
            <person name="Rolfs A."/>
            <person name="Halleck A."/>
            <person name="Hines L."/>
            <person name="Eisenstein S."/>
            <person name="Koundinya M."/>
            <person name="Raphael J."/>
            <person name="Moreira D."/>
            <person name="Kelley T."/>
            <person name="LaBaer J."/>
            <person name="Lin Y."/>
            <person name="Phelan M."/>
            <person name="Farmer A."/>
        </authorList>
    </citation>
    <scope>NUCLEOTIDE SEQUENCE [LARGE SCALE MRNA]</scope>
</reference>
<reference key="3">
    <citation type="journal article" date="2006" name="Nature">
        <title>The DNA sequence and biological annotation of human chromosome 1.</title>
        <authorList>
            <person name="Gregory S.G."/>
            <person name="Barlow K.F."/>
            <person name="McLay K.E."/>
            <person name="Kaul R."/>
            <person name="Swarbreck D."/>
            <person name="Dunham A."/>
            <person name="Scott C.E."/>
            <person name="Howe K.L."/>
            <person name="Woodfine K."/>
            <person name="Spencer C.C.A."/>
            <person name="Jones M.C."/>
            <person name="Gillson C."/>
            <person name="Searle S."/>
            <person name="Zhou Y."/>
            <person name="Kokocinski F."/>
            <person name="McDonald L."/>
            <person name="Evans R."/>
            <person name="Phillips K."/>
            <person name="Atkinson A."/>
            <person name="Cooper R."/>
            <person name="Jones C."/>
            <person name="Hall R.E."/>
            <person name="Andrews T.D."/>
            <person name="Lloyd C."/>
            <person name="Ainscough R."/>
            <person name="Almeida J.P."/>
            <person name="Ambrose K.D."/>
            <person name="Anderson F."/>
            <person name="Andrew R.W."/>
            <person name="Ashwell R.I.S."/>
            <person name="Aubin K."/>
            <person name="Babbage A.K."/>
            <person name="Bagguley C.L."/>
            <person name="Bailey J."/>
            <person name="Beasley H."/>
            <person name="Bethel G."/>
            <person name="Bird C.P."/>
            <person name="Bray-Allen S."/>
            <person name="Brown J.Y."/>
            <person name="Brown A.J."/>
            <person name="Buckley D."/>
            <person name="Burton J."/>
            <person name="Bye J."/>
            <person name="Carder C."/>
            <person name="Chapman J.C."/>
            <person name="Clark S.Y."/>
            <person name="Clarke G."/>
            <person name="Clee C."/>
            <person name="Cobley V."/>
            <person name="Collier R.E."/>
            <person name="Corby N."/>
            <person name="Coville G.J."/>
            <person name="Davies J."/>
            <person name="Deadman R."/>
            <person name="Dunn M."/>
            <person name="Earthrowl M."/>
            <person name="Ellington A.G."/>
            <person name="Errington H."/>
            <person name="Frankish A."/>
            <person name="Frankland J."/>
            <person name="French L."/>
            <person name="Garner P."/>
            <person name="Garnett J."/>
            <person name="Gay L."/>
            <person name="Ghori M.R.J."/>
            <person name="Gibson R."/>
            <person name="Gilby L.M."/>
            <person name="Gillett W."/>
            <person name="Glithero R.J."/>
            <person name="Grafham D.V."/>
            <person name="Griffiths C."/>
            <person name="Griffiths-Jones S."/>
            <person name="Grocock R."/>
            <person name="Hammond S."/>
            <person name="Harrison E.S.I."/>
            <person name="Hart E."/>
            <person name="Haugen E."/>
            <person name="Heath P.D."/>
            <person name="Holmes S."/>
            <person name="Holt K."/>
            <person name="Howden P.J."/>
            <person name="Hunt A.R."/>
            <person name="Hunt S.E."/>
            <person name="Hunter G."/>
            <person name="Isherwood J."/>
            <person name="James R."/>
            <person name="Johnson C."/>
            <person name="Johnson D."/>
            <person name="Joy A."/>
            <person name="Kay M."/>
            <person name="Kershaw J.K."/>
            <person name="Kibukawa M."/>
            <person name="Kimberley A.M."/>
            <person name="King A."/>
            <person name="Knights A.J."/>
            <person name="Lad H."/>
            <person name="Laird G."/>
            <person name="Lawlor S."/>
            <person name="Leongamornlert D.A."/>
            <person name="Lloyd D.M."/>
            <person name="Loveland J."/>
            <person name="Lovell J."/>
            <person name="Lush M.J."/>
            <person name="Lyne R."/>
            <person name="Martin S."/>
            <person name="Mashreghi-Mohammadi M."/>
            <person name="Matthews L."/>
            <person name="Matthews N.S.W."/>
            <person name="McLaren S."/>
            <person name="Milne S."/>
            <person name="Mistry S."/>
            <person name="Moore M.J.F."/>
            <person name="Nickerson T."/>
            <person name="O'Dell C.N."/>
            <person name="Oliver K."/>
            <person name="Palmeiri A."/>
            <person name="Palmer S.A."/>
            <person name="Parker A."/>
            <person name="Patel D."/>
            <person name="Pearce A.V."/>
            <person name="Peck A.I."/>
            <person name="Pelan S."/>
            <person name="Phelps K."/>
            <person name="Phillimore B.J."/>
            <person name="Plumb R."/>
            <person name="Rajan J."/>
            <person name="Raymond C."/>
            <person name="Rouse G."/>
            <person name="Saenphimmachak C."/>
            <person name="Sehra H.K."/>
            <person name="Sheridan E."/>
            <person name="Shownkeen R."/>
            <person name="Sims S."/>
            <person name="Skuce C.D."/>
            <person name="Smith M."/>
            <person name="Steward C."/>
            <person name="Subramanian S."/>
            <person name="Sycamore N."/>
            <person name="Tracey A."/>
            <person name="Tromans A."/>
            <person name="Van Helmond Z."/>
            <person name="Wall M."/>
            <person name="Wallis J.M."/>
            <person name="White S."/>
            <person name="Whitehead S.L."/>
            <person name="Wilkinson J.E."/>
            <person name="Willey D.L."/>
            <person name="Williams H."/>
            <person name="Wilming L."/>
            <person name="Wray P.W."/>
            <person name="Wu Z."/>
            <person name="Coulson A."/>
            <person name="Vaudin M."/>
            <person name="Sulston J.E."/>
            <person name="Durbin R.M."/>
            <person name="Hubbard T."/>
            <person name="Wooster R."/>
            <person name="Dunham I."/>
            <person name="Carter N.P."/>
            <person name="McVean G."/>
            <person name="Ross M.T."/>
            <person name="Harrow J."/>
            <person name="Olson M.V."/>
            <person name="Beck S."/>
            <person name="Rogers J."/>
            <person name="Bentley D.R."/>
        </authorList>
    </citation>
    <scope>NUCLEOTIDE SEQUENCE [LARGE SCALE GENOMIC DNA]</scope>
</reference>
<reference key="4">
    <citation type="journal article" date="2004" name="Genome Res.">
        <title>The status, quality, and expansion of the NIH full-length cDNA project: the Mammalian Gene Collection (MGC).</title>
        <authorList>
            <consortium name="The MGC Project Team"/>
        </authorList>
    </citation>
    <scope>NUCLEOTIDE SEQUENCE [LARGE SCALE MRNA]</scope>
    <source>
        <tissue>Lymph</tissue>
    </source>
</reference>
<reference key="5">
    <citation type="submission" date="1998-02" db="EMBL/GenBank/DDBJ databases">
        <title>Sequencing of human chromosome 1.</title>
        <authorList>
            <person name="Connolly K.S."/>
            <person name="Gunning K.M."/>
            <person name="Davis C.A."/>
            <person name="Kadner K."/>
            <person name="Subramanian S."/>
            <person name="Miguel T."/>
            <person name="Lewis K.D."/>
            <person name="Fridlyand J."/>
            <person name="Alcivare D."/>
            <person name="Benke J.A."/>
            <person name="Bondoc M."/>
            <person name="Bowen E."/>
            <person name="Chiang A."/>
            <person name="Critz P."/>
            <person name="Jaklevic M.A."/>
            <person name="Lindo K."/>
            <person name="Lindquist K."/>
            <person name="Miller C."/>
            <person name="Patel S."/>
            <person name="Piscia C."/>
            <person name="Riley B.E."/>
            <person name="Rojeski H."/>
            <person name="Sarmiento R."/>
            <person name="Yu C."/>
            <person name="Montenegro M."/>
            <person name="Aerts A."/>
            <person name="Chung A."/>
            <person name="Abrajano A."/>
            <person name="Baker M."/>
            <person name="Gau C."/>
            <person name="Jett J."/>
            <person name="Ko C."/>
            <person name="Beall K."/>
            <person name="Woolley J.P."/>
            <person name="Conboy J."/>
            <person name="Fang J.F."/>
            <person name="Narla M."/>
            <person name="Stultz J.L."/>
            <person name="Kimmerly W."/>
            <person name="Martin C.H."/>
        </authorList>
    </citation>
    <scope>NUCLEOTIDE SEQUENCE [GENOMIC DNA] OF 1-192</scope>
</reference>
<reference key="6">
    <citation type="journal article" date="1992" name="Genes Dev.">
        <title>SR proteins: a conserved family of pre-mRNA splicing factors.</title>
        <authorList>
            <person name="Zahler A.M."/>
            <person name="Lane W.S."/>
            <person name="Stolk J.A."/>
            <person name="Roth M.B."/>
        </authorList>
    </citation>
    <scope>PROTEIN SEQUENCE OF 35-45; 84-89; 126-137; 140-154 AND 172-179</scope>
</reference>
<reference key="7">
    <citation type="journal article" date="1998" name="Genes Dev.">
        <title>A coactivator of pre-mRNA splicing.</title>
        <authorList>
            <person name="Blencowe B.J."/>
            <person name="Issner R."/>
            <person name="Nickerson J.A."/>
            <person name="Sharp P.A."/>
        </authorList>
    </citation>
    <scope>IDENTIFICATION IN A MRNA SPLICING COMPLEX WITH SRSF5; SNRNP70; SNRPA1; SRRM1 AND SRRM2</scope>
</reference>
<reference key="8">
    <citation type="journal article" date="2004" name="J. Neurochem.">
        <title>Tau exon 10, whose missplicing causes frontotemporal dementia, is regulated by an intricate interplay of cis elements and trans factors.</title>
        <authorList>
            <person name="Wang J."/>
            <person name="Gao Q.S."/>
            <person name="Wang Y."/>
            <person name="Lafyatis R."/>
            <person name="Stamm S."/>
            <person name="Andreadis A."/>
        </authorList>
    </citation>
    <scope>FUNCTION</scope>
</reference>
<reference key="9">
    <citation type="journal article" date="2003" name="Invest. Ophthalmol. Vis. Sci.">
        <title>Pinin/DRS/memA interacts with SRp75, SRm300 and SRrp130 in corneal epithelial cells.</title>
        <authorList>
            <person name="Zimowska G."/>
            <person name="Shi J."/>
            <person name="Munguba G."/>
            <person name="Jackson M.R."/>
            <person name="Alpatov R."/>
            <person name="Simmons M.N."/>
            <person name="Shi Y."/>
            <person name="Sugrue S.P."/>
        </authorList>
    </citation>
    <scope>INTERACTION WITH PNN</scope>
    <scope>SUBCELLULAR LOCATION</scope>
</reference>
<reference key="10">
    <citation type="journal article" date="2006" name="Cell">
        <title>Global, in vivo, and site-specific phosphorylation dynamics in signaling networks.</title>
        <authorList>
            <person name="Olsen J.V."/>
            <person name="Blagoev B."/>
            <person name="Gnad F."/>
            <person name="Macek B."/>
            <person name="Kumar C."/>
            <person name="Mortensen P."/>
            <person name="Mann M."/>
        </authorList>
    </citation>
    <scope>IDENTIFICATION BY MASS SPECTROMETRY [LARGE SCALE ANALYSIS]</scope>
    <source>
        <tissue>Cervix carcinoma</tissue>
    </source>
</reference>
<reference key="11">
    <citation type="journal article" date="2010" name="Sci. Signal.">
        <title>Quantitative phosphoproteomics reveals widespread full phosphorylation site occupancy during mitosis.</title>
        <authorList>
            <person name="Olsen J.V."/>
            <person name="Vermeulen M."/>
            <person name="Santamaria A."/>
            <person name="Kumar C."/>
            <person name="Miller M.L."/>
            <person name="Jensen L.J."/>
            <person name="Gnad F."/>
            <person name="Cox J."/>
            <person name="Jensen T.S."/>
            <person name="Nigg E.A."/>
            <person name="Brunak S."/>
            <person name="Mann M."/>
        </authorList>
    </citation>
    <scope>PHOSPHORYLATION [LARGE SCALE ANALYSIS] AT SER-78 AND SER-431</scope>
    <scope>IDENTIFICATION BY MASS SPECTROMETRY [LARGE SCALE ANALYSIS]</scope>
    <source>
        <tissue>Cervix carcinoma</tissue>
    </source>
</reference>
<reference key="12">
    <citation type="journal article" date="2011" name="BMC Syst. Biol.">
        <title>Initial characterization of the human central proteome.</title>
        <authorList>
            <person name="Burkard T.R."/>
            <person name="Planyavsky M."/>
            <person name="Kaupe I."/>
            <person name="Breitwieser F.P."/>
            <person name="Buerckstuemmer T."/>
            <person name="Bennett K.L."/>
            <person name="Superti-Furga G."/>
            <person name="Colinge J."/>
        </authorList>
    </citation>
    <scope>IDENTIFICATION BY MASS SPECTROMETRY [LARGE SCALE ANALYSIS]</scope>
</reference>
<reference key="13">
    <citation type="journal article" date="2011" name="Sci. Signal.">
        <title>System-wide temporal characterization of the proteome and phosphoproteome of human embryonic stem cell differentiation.</title>
        <authorList>
            <person name="Rigbolt K.T."/>
            <person name="Prokhorova T.A."/>
            <person name="Akimov V."/>
            <person name="Henningsen J."/>
            <person name="Johansen P.T."/>
            <person name="Kratchmarova I."/>
            <person name="Kassem M."/>
            <person name="Mann M."/>
            <person name="Olsen J.V."/>
            <person name="Blagoev B."/>
        </authorList>
    </citation>
    <scope>PHOSPHORYLATION [LARGE SCALE ANALYSIS] AT SER-431</scope>
    <scope>IDENTIFICATION BY MASS SPECTROMETRY [LARGE SCALE ANALYSIS]</scope>
</reference>
<reference key="14">
    <citation type="journal article" date="2013" name="J. Proteome Res.">
        <title>Toward a comprehensive characterization of a human cancer cell phosphoproteome.</title>
        <authorList>
            <person name="Zhou H."/>
            <person name="Di Palma S."/>
            <person name="Preisinger C."/>
            <person name="Peng M."/>
            <person name="Polat A.N."/>
            <person name="Heck A.J."/>
            <person name="Mohammed S."/>
        </authorList>
    </citation>
    <scope>PHOSPHORYLATION [LARGE SCALE ANALYSIS] AT SER-84; SER-288; SER-290; SER-292; SER-456; SER-458 AND SER-460</scope>
    <scope>IDENTIFICATION BY MASS SPECTROMETRY [LARGE SCALE ANALYSIS]</scope>
    <source>
        <tissue>Cervix carcinoma</tissue>
        <tissue>Erythroleukemia</tissue>
    </source>
</reference>
<reference key="15">
    <citation type="journal article" date="2014" name="J. Proteomics">
        <title>An enzyme assisted RP-RPLC approach for in-depth analysis of human liver phosphoproteome.</title>
        <authorList>
            <person name="Bian Y."/>
            <person name="Song C."/>
            <person name="Cheng K."/>
            <person name="Dong M."/>
            <person name="Wang F."/>
            <person name="Huang J."/>
            <person name="Sun D."/>
            <person name="Wang L."/>
            <person name="Ye M."/>
            <person name="Zou H."/>
        </authorList>
    </citation>
    <scope>PHOSPHORYLATION [LARGE SCALE ANALYSIS] AT SER-446 AND SER-458</scope>
    <scope>IDENTIFICATION BY MASS SPECTROMETRY [LARGE SCALE ANALYSIS]</scope>
    <source>
        <tissue>Liver</tissue>
    </source>
</reference>
<keyword id="KW-0903">Direct protein sequencing</keyword>
<keyword id="KW-0507">mRNA processing</keyword>
<keyword id="KW-0508">mRNA splicing</keyword>
<keyword id="KW-0539">Nucleus</keyword>
<keyword id="KW-0597">Phosphoprotein</keyword>
<keyword id="KW-1267">Proteomics identification</keyword>
<keyword id="KW-1185">Reference proteome</keyword>
<keyword id="KW-0677">Repeat</keyword>
<keyword id="KW-0678">Repressor</keyword>
<keyword id="KW-0694">RNA-binding</keyword>